<protein>
    <recommendedName>
        <fullName>Semaphorin-3D</fullName>
    </recommendedName>
</protein>
<gene>
    <name type="primary">Sema3d</name>
</gene>
<accession>Q8BH34</accession>
<dbReference type="EMBL" id="AK028900">
    <property type="protein sequence ID" value="BAC26185.1"/>
    <property type="molecule type" value="mRNA"/>
</dbReference>
<dbReference type="EMBL" id="AK052671">
    <property type="protein sequence ID" value="BAC35092.1"/>
    <property type="molecule type" value="mRNA"/>
</dbReference>
<dbReference type="CCDS" id="CCDS39013.1"/>
<dbReference type="RefSeq" id="NP_083158.3">
    <property type="nucleotide sequence ID" value="NM_028882.4"/>
</dbReference>
<dbReference type="RefSeq" id="XP_030109906.1">
    <property type="nucleotide sequence ID" value="XM_030254046.2"/>
</dbReference>
<dbReference type="SMR" id="Q8BH34"/>
<dbReference type="BioGRID" id="223867">
    <property type="interactions" value="3"/>
</dbReference>
<dbReference type="FunCoup" id="Q8BH34">
    <property type="interactions" value="416"/>
</dbReference>
<dbReference type="STRING" id="10090.ENSMUSP00000030868"/>
<dbReference type="GlyCosmos" id="Q8BH34">
    <property type="glycosylation" value="3 sites, No reported glycans"/>
</dbReference>
<dbReference type="GlyGen" id="Q8BH34">
    <property type="glycosylation" value="3 sites"/>
</dbReference>
<dbReference type="PhosphoSitePlus" id="Q8BH34"/>
<dbReference type="jPOST" id="Q8BH34"/>
<dbReference type="PaxDb" id="10090-ENSMUSP00000030868"/>
<dbReference type="ProteomicsDB" id="256771"/>
<dbReference type="Antibodypedia" id="29622">
    <property type="antibodies" value="145 antibodies from 22 providers"/>
</dbReference>
<dbReference type="DNASU" id="108151"/>
<dbReference type="Ensembl" id="ENSMUST00000030868.11">
    <property type="protein sequence ID" value="ENSMUSP00000030868.7"/>
    <property type="gene ID" value="ENSMUSG00000040254.12"/>
</dbReference>
<dbReference type="GeneID" id="108151"/>
<dbReference type="KEGG" id="mmu:108151"/>
<dbReference type="UCSC" id="uc008wlx.2">
    <property type="organism name" value="mouse"/>
</dbReference>
<dbReference type="AGR" id="MGI:1860118"/>
<dbReference type="CTD" id="223117"/>
<dbReference type="MGI" id="MGI:1860118">
    <property type="gene designation" value="Sema3d"/>
</dbReference>
<dbReference type="VEuPathDB" id="HostDB:ENSMUSG00000040254"/>
<dbReference type="eggNOG" id="KOG3611">
    <property type="taxonomic scope" value="Eukaryota"/>
</dbReference>
<dbReference type="GeneTree" id="ENSGT00940000156681"/>
<dbReference type="InParanoid" id="Q8BH34"/>
<dbReference type="OMA" id="KIYWPAT"/>
<dbReference type="OrthoDB" id="9988752at2759"/>
<dbReference type="PhylomeDB" id="Q8BH34"/>
<dbReference type="TreeFam" id="TF316102"/>
<dbReference type="BioGRID-ORCS" id="108151">
    <property type="hits" value="3 hits in 78 CRISPR screens"/>
</dbReference>
<dbReference type="ChiTaRS" id="Sema3d">
    <property type="organism name" value="mouse"/>
</dbReference>
<dbReference type="PRO" id="PR:Q8BH34"/>
<dbReference type="Proteomes" id="UP000000589">
    <property type="component" value="Chromosome 5"/>
</dbReference>
<dbReference type="RNAct" id="Q8BH34">
    <property type="molecule type" value="protein"/>
</dbReference>
<dbReference type="Bgee" id="ENSMUSG00000040254">
    <property type="expression patterns" value="Expressed in efferent duct and 215 other cell types or tissues"/>
</dbReference>
<dbReference type="ExpressionAtlas" id="Q8BH34">
    <property type="expression patterns" value="baseline and differential"/>
</dbReference>
<dbReference type="GO" id="GO:0005615">
    <property type="term" value="C:extracellular space"/>
    <property type="evidence" value="ECO:0007005"/>
    <property type="project" value="BHF-UCL"/>
</dbReference>
<dbReference type="GO" id="GO:0030215">
    <property type="term" value="F:semaphorin receptor binding"/>
    <property type="evidence" value="ECO:0007669"/>
    <property type="project" value="InterPro"/>
</dbReference>
<dbReference type="GO" id="GO:0030154">
    <property type="term" value="P:cell differentiation"/>
    <property type="evidence" value="ECO:0007669"/>
    <property type="project" value="UniProtKB-KW"/>
</dbReference>
<dbReference type="GO" id="GO:0007399">
    <property type="term" value="P:nervous system development"/>
    <property type="evidence" value="ECO:0007669"/>
    <property type="project" value="UniProtKB-KW"/>
</dbReference>
<dbReference type="CDD" id="cd05871">
    <property type="entry name" value="Ig_Sema3"/>
    <property type="match status" value="1"/>
</dbReference>
<dbReference type="CDD" id="cd11252">
    <property type="entry name" value="Sema_3D"/>
    <property type="match status" value="1"/>
</dbReference>
<dbReference type="FunFam" id="2.130.10.10:FF:000015">
    <property type="entry name" value="Semaphorin 3B"/>
    <property type="match status" value="1"/>
</dbReference>
<dbReference type="FunFam" id="2.60.40.10:FF:000030">
    <property type="entry name" value="Semaphorin 3F like"/>
    <property type="match status" value="1"/>
</dbReference>
<dbReference type="FunFam" id="3.30.1680.10:FF:000001">
    <property type="entry name" value="Semaphorin 3F like"/>
    <property type="match status" value="1"/>
</dbReference>
<dbReference type="Gene3D" id="2.60.40.10">
    <property type="entry name" value="Immunoglobulins"/>
    <property type="match status" value="1"/>
</dbReference>
<dbReference type="Gene3D" id="3.30.1680.10">
    <property type="entry name" value="ligand-binding face of the semaphorins, domain 2"/>
    <property type="match status" value="1"/>
</dbReference>
<dbReference type="Gene3D" id="2.130.10.10">
    <property type="entry name" value="YVTN repeat-like/Quinoprotein amine dehydrogenase"/>
    <property type="match status" value="1"/>
</dbReference>
<dbReference type="InterPro" id="IPR007110">
    <property type="entry name" value="Ig-like_dom"/>
</dbReference>
<dbReference type="InterPro" id="IPR036179">
    <property type="entry name" value="Ig-like_dom_sf"/>
</dbReference>
<dbReference type="InterPro" id="IPR013783">
    <property type="entry name" value="Ig-like_fold"/>
</dbReference>
<dbReference type="InterPro" id="IPR041416">
    <property type="entry name" value="IL-1RAcP-like_ig"/>
</dbReference>
<dbReference type="InterPro" id="IPR016201">
    <property type="entry name" value="PSI"/>
</dbReference>
<dbReference type="InterPro" id="IPR042582">
    <property type="entry name" value="Sema3D_Sema"/>
</dbReference>
<dbReference type="InterPro" id="IPR001627">
    <property type="entry name" value="Semap_dom"/>
</dbReference>
<dbReference type="InterPro" id="IPR036352">
    <property type="entry name" value="Semap_dom_sf"/>
</dbReference>
<dbReference type="InterPro" id="IPR027231">
    <property type="entry name" value="Semaphorin"/>
</dbReference>
<dbReference type="InterPro" id="IPR015943">
    <property type="entry name" value="WD40/YVTN_repeat-like_dom_sf"/>
</dbReference>
<dbReference type="PANTHER" id="PTHR11036">
    <property type="entry name" value="SEMAPHORIN"/>
    <property type="match status" value="1"/>
</dbReference>
<dbReference type="PANTHER" id="PTHR11036:SF36">
    <property type="entry name" value="SEMAPHORIN-3D"/>
    <property type="match status" value="1"/>
</dbReference>
<dbReference type="Pfam" id="PF18452">
    <property type="entry name" value="Ig_6"/>
    <property type="match status" value="1"/>
</dbReference>
<dbReference type="Pfam" id="PF01403">
    <property type="entry name" value="Sema"/>
    <property type="match status" value="1"/>
</dbReference>
<dbReference type="SMART" id="SM00423">
    <property type="entry name" value="PSI"/>
    <property type="match status" value="1"/>
</dbReference>
<dbReference type="SMART" id="SM00630">
    <property type="entry name" value="Sema"/>
    <property type="match status" value="1"/>
</dbReference>
<dbReference type="SUPFAM" id="SSF48726">
    <property type="entry name" value="Immunoglobulin"/>
    <property type="match status" value="1"/>
</dbReference>
<dbReference type="SUPFAM" id="SSF103575">
    <property type="entry name" value="Plexin repeat"/>
    <property type="match status" value="1"/>
</dbReference>
<dbReference type="SUPFAM" id="SSF101912">
    <property type="entry name" value="Sema domain"/>
    <property type="match status" value="1"/>
</dbReference>
<dbReference type="PROSITE" id="PS50835">
    <property type="entry name" value="IG_LIKE"/>
    <property type="match status" value="1"/>
</dbReference>
<dbReference type="PROSITE" id="PS51004">
    <property type="entry name" value="SEMA"/>
    <property type="match status" value="1"/>
</dbReference>
<feature type="signal peptide" evidence="2">
    <location>
        <begin position="1"/>
        <end position="37"/>
    </location>
</feature>
<feature type="chain" id="PRO_0000042161" description="Semaphorin-3D">
    <location>
        <begin position="38"/>
        <end position="777"/>
    </location>
</feature>
<feature type="domain" description="Sema" evidence="3">
    <location>
        <begin position="44"/>
        <end position="531"/>
    </location>
</feature>
<feature type="domain" description="PSI">
    <location>
        <begin position="533"/>
        <end position="585"/>
    </location>
</feature>
<feature type="domain" description="Ig-like C2-type">
    <location>
        <begin position="592"/>
        <end position="680"/>
    </location>
</feature>
<feature type="region of interest" description="Disordered" evidence="4">
    <location>
        <begin position="740"/>
        <end position="777"/>
    </location>
</feature>
<feature type="compositionally biased region" description="Basic residues" evidence="4">
    <location>
        <begin position="740"/>
        <end position="765"/>
    </location>
</feature>
<feature type="compositionally biased region" description="Basic and acidic residues" evidence="4">
    <location>
        <begin position="766"/>
        <end position="777"/>
    </location>
</feature>
<feature type="glycosylation site" description="N-linked (GlcNAc...) asparagine" evidence="2">
    <location>
        <position position="139"/>
    </location>
</feature>
<feature type="glycosylation site" description="N-linked (GlcNAc...) asparagine" evidence="2">
    <location>
        <position position="607"/>
    </location>
</feature>
<feature type="glycosylation site" description="N-linked (GlcNAc...) asparagine" evidence="2">
    <location>
        <position position="724"/>
    </location>
</feature>
<feature type="disulfide bond" evidence="1">
    <location>
        <begin position="117"/>
        <end position="128"/>
    </location>
</feature>
<feature type="disulfide bond" evidence="1">
    <location>
        <begin position="146"/>
        <end position="155"/>
    </location>
</feature>
<feature type="disulfide bond" evidence="1">
    <location>
        <begin position="286"/>
        <end position="398"/>
    </location>
</feature>
<feature type="disulfide bond" evidence="1">
    <location>
        <begin position="310"/>
        <end position="358"/>
    </location>
</feature>
<feature type="disulfide bond" evidence="1">
    <location>
        <begin position="534"/>
        <end position="552"/>
    </location>
</feature>
<feature type="disulfide bond" evidence="1">
    <location>
        <begin position="665"/>
        <end position="731"/>
    </location>
</feature>
<name>SEM3D_MOUSE</name>
<organism>
    <name type="scientific">Mus musculus</name>
    <name type="common">Mouse</name>
    <dbReference type="NCBI Taxonomy" id="10090"/>
    <lineage>
        <taxon>Eukaryota</taxon>
        <taxon>Metazoa</taxon>
        <taxon>Chordata</taxon>
        <taxon>Craniata</taxon>
        <taxon>Vertebrata</taxon>
        <taxon>Euteleostomi</taxon>
        <taxon>Mammalia</taxon>
        <taxon>Eutheria</taxon>
        <taxon>Euarchontoglires</taxon>
        <taxon>Glires</taxon>
        <taxon>Rodentia</taxon>
        <taxon>Myomorpha</taxon>
        <taxon>Muroidea</taxon>
        <taxon>Muridae</taxon>
        <taxon>Murinae</taxon>
        <taxon>Mus</taxon>
        <taxon>Mus</taxon>
    </lineage>
</organism>
<keyword id="KW-0217">Developmental protein</keyword>
<keyword id="KW-0221">Differentiation</keyword>
<keyword id="KW-0903">Direct protein sequencing</keyword>
<keyword id="KW-1015">Disulfide bond</keyword>
<keyword id="KW-0325">Glycoprotein</keyword>
<keyword id="KW-0393">Immunoglobulin domain</keyword>
<keyword id="KW-0524">Neurogenesis</keyword>
<keyword id="KW-1185">Reference proteome</keyword>
<keyword id="KW-0964">Secreted</keyword>
<keyword id="KW-0732">Signal</keyword>
<sequence>MNVTKDENPRSRSQDLHLFHAWMMLIMTVLFLPVTETSKQNIPRLKLTYKDLLLSNTCIPFLGSSEGLDFQTLLLDEERGILLLGAKDHVFLLSLVDLNKNFKKIYWPAAKERVELCKLAGKDANAECANFIRVLQPYNKTHVYVCGTGAFHPLCGYIDLGANKEELIFKLDTHNLESGRLKCPFDPQQPFASVMTDEHLYSGTASDFLGKDTAFTRSLGLMQDHHSIRTDISEHHWLNGAKFIGTFPIPDTYNPDDDKIYFFFRESSQEGSTSDRSILSRVGRVCKNDVGGQRSLINKWTTFLKARLICSIPGSDGADTHFDELQDIYLLPTRDERNPVVYGVFTTTSSIFKGSAVCVYSMADIRAVFNGPYAHKESADHRWVQYDGRIPYPRPGTCPSKTYDPLIKSTRDFPDDVISFIRRHPVMYKSVYPVAGAPTFKRINVDYRLTQIVVDHVVAEDGQYDVMFLGTDIGTVLKVVSISKEKWNMEEVVLEELQVFKHPTAILNMELSLKQQQLYVGSWDGLVQLSLHRCDTYGKACADCCLARDPYCAWDGNACSRYAPTSKRRARRQDVKYGDPITQCWDIEDSISHETADEKVIFGIEFNSTFLECIPKSQQASVEWYIQRSGDEHREELKPDERIIKTDYGLLIRSLQKKDSGMYYCKAQEHTFIHTIVKLTLNVIENEQMENTQRAEYQEGQVKDLLAESRLRYKDYIQILSSPNFSLDQYCEQMWYKEKRRQRNKGSPKWKHMQEMKKKRNRRHHRDLDELQRSVAT</sequence>
<evidence type="ECO:0000250" key="1"/>
<evidence type="ECO:0000255" key="2"/>
<evidence type="ECO:0000255" key="3">
    <source>
        <dbReference type="PROSITE-ProRule" id="PRU00352"/>
    </source>
</evidence>
<evidence type="ECO:0000256" key="4">
    <source>
        <dbReference type="SAM" id="MobiDB-lite"/>
    </source>
</evidence>
<evidence type="ECO:0000305" key="5"/>
<reference key="1">
    <citation type="journal article" date="2005" name="Science">
        <title>The transcriptional landscape of the mammalian genome.</title>
        <authorList>
            <person name="Carninci P."/>
            <person name="Kasukawa T."/>
            <person name="Katayama S."/>
            <person name="Gough J."/>
            <person name="Frith M.C."/>
            <person name="Maeda N."/>
            <person name="Oyama R."/>
            <person name="Ravasi T."/>
            <person name="Lenhard B."/>
            <person name="Wells C."/>
            <person name="Kodzius R."/>
            <person name="Shimokawa K."/>
            <person name="Bajic V.B."/>
            <person name="Brenner S.E."/>
            <person name="Batalov S."/>
            <person name="Forrest A.R."/>
            <person name="Zavolan M."/>
            <person name="Davis M.J."/>
            <person name="Wilming L.G."/>
            <person name="Aidinis V."/>
            <person name="Allen J.E."/>
            <person name="Ambesi-Impiombato A."/>
            <person name="Apweiler R."/>
            <person name="Aturaliya R.N."/>
            <person name="Bailey T.L."/>
            <person name="Bansal M."/>
            <person name="Baxter L."/>
            <person name="Beisel K.W."/>
            <person name="Bersano T."/>
            <person name="Bono H."/>
            <person name="Chalk A.M."/>
            <person name="Chiu K.P."/>
            <person name="Choudhary V."/>
            <person name="Christoffels A."/>
            <person name="Clutterbuck D.R."/>
            <person name="Crowe M.L."/>
            <person name="Dalla E."/>
            <person name="Dalrymple B.P."/>
            <person name="de Bono B."/>
            <person name="Della Gatta G."/>
            <person name="di Bernardo D."/>
            <person name="Down T."/>
            <person name="Engstrom P."/>
            <person name="Fagiolini M."/>
            <person name="Faulkner G."/>
            <person name="Fletcher C.F."/>
            <person name="Fukushima T."/>
            <person name="Furuno M."/>
            <person name="Futaki S."/>
            <person name="Gariboldi M."/>
            <person name="Georgii-Hemming P."/>
            <person name="Gingeras T.R."/>
            <person name="Gojobori T."/>
            <person name="Green R.E."/>
            <person name="Gustincich S."/>
            <person name="Harbers M."/>
            <person name="Hayashi Y."/>
            <person name="Hensch T.K."/>
            <person name="Hirokawa N."/>
            <person name="Hill D."/>
            <person name="Huminiecki L."/>
            <person name="Iacono M."/>
            <person name="Ikeo K."/>
            <person name="Iwama A."/>
            <person name="Ishikawa T."/>
            <person name="Jakt M."/>
            <person name="Kanapin A."/>
            <person name="Katoh M."/>
            <person name="Kawasawa Y."/>
            <person name="Kelso J."/>
            <person name="Kitamura H."/>
            <person name="Kitano H."/>
            <person name="Kollias G."/>
            <person name="Krishnan S.P."/>
            <person name="Kruger A."/>
            <person name="Kummerfeld S.K."/>
            <person name="Kurochkin I.V."/>
            <person name="Lareau L.F."/>
            <person name="Lazarevic D."/>
            <person name="Lipovich L."/>
            <person name="Liu J."/>
            <person name="Liuni S."/>
            <person name="McWilliam S."/>
            <person name="Madan Babu M."/>
            <person name="Madera M."/>
            <person name="Marchionni L."/>
            <person name="Matsuda H."/>
            <person name="Matsuzawa S."/>
            <person name="Miki H."/>
            <person name="Mignone F."/>
            <person name="Miyake S."/>
            <person name="Morris K."/>
            <person name="Mottagui-Tabar S."/>
            <person name="Mulder N."/>
            <person name="Nakano N."/>
            <person name="Nakauchi H."/>
            <person name="Ng P."/>
            <person name="Nilsson R."/>
            <person name="Nishiguchi S."/>
            <person name="Nishikawa S."/>
            <person name="Nori F."/>
            <person name="Ohara O."/>
            <person name="Okazaki Y."/>
            <person name="Orlando V."/>
            <person name="Pang K.C."/>
            <person name="Pavan W.J."/>
            <person name="Pavesi G."/>
            <person name="Pesole G."/>
            <person name="Petrovsky N."/>
            <person name="Piazza S."/>
            <person name="Reed J."/>
            <person name="Reid J.F."/>
            <person name="Ring B.Z."/>
            <person name="Ringwald M."/>
            <person name="Rost B."/>
            <person name="Ruan Y."/>
            <person name="Salzberg S.L."/>
            <person name="Sandelin A."/>
            <person name="Schneider C."/>
            <person name="Schoenbach C."/>
            <person name="Sekiguchi K."/>
            <person name="Semple C.A."/>
            <person name="Seno S."/>
            <person name="Sessa L."/>
            <person name="Sheng Y."/>
            <person name="Shibata Y."/>
            <person name="Shimada H."/>
            <person name="Shimada K."/>
            <person name="Silva D."/>
            <person name="Sinclair B."/>
            <person name="Sperling S."/>
            <person name="Stupka E."/>
            <person name="Sugiura K."/>
            <person name="Sultana R."/>
            <person name="Takenaka Y."/>
            <person name="Taki K."/>
            <person name="Tammoja K."/>
            <person name="Tan S.L."/>
            <person name="Tang S."/>
            <person name="Taylor M.S."/>
            <person name="Tegner J."/>
            <person name="Teichmann S.A."/>
            <person name="Ueda H.R."/>
            <person name="van Nimwegen E."/>
            <person name="Verardo R."/>
            <person name="Wei C.L."/>
            <person name="Yagi K."/>
            <person name="Yamanishi H."/>
            <person name="Zabarovsky E."/>
            <person name="Zhu S."/>
            <person name="Zimmer A."/>
            <person name="Hide W."/>
            <person name="Bult C."/>
            <person name="Grimmond S.M."/>
            <person name="Teasdale R.D."/>
            <person name="Liu E.T."/>
            <person name="Brusic V."/>
            <person name="Quackenbush J."/>
            <person name="Wahlestedt C."/>
            <person name="Mattick J.S."/>
            <person name="Hume D.A."/>
            <person name="Kai C."/>
            <person name="Sasaki D."/>
            <person name="Tomaru Y."/>
            <person name="Fukuda S."/>
            <person name="Kanamori-Katayama M."/>
            <person name="Suzuki M."/>
            <person name="Aoki J."/>
            <person name="Arakawa T."/>
            <person name="Iida J."/>
            <person name="Imamura K."/>
            <person name="Itoh M."/>
            <person name="Kato T."/>
            <person name="Kawaji H."/>
            <person name="Kawagashira N."/>
            <person name="Kawashima T."/>
            <person name="Kojima M."/>
            <person name="Kondo S."/>
            <person name="Konno H."/>
            <person name="Nakano K."/>
            <person name="Ninomiya N."/>
            <person name="Nishio T."/>
            <person name="Okada M."/>
            <person name="Plessy C."/>
            <person name="Shibata K."/>
            <person name="Shiraki T."/>
            <person name="Suzuki S."/>
            <person name="Tagami M."/>
            <person name="Waki K."/>
            <person name="Watahiki A."/>
            <person name="Okamura-Oho Y."/>
            <person name="Suzuki H."/>
            <person name="Kawai J."/>
            <person name="Hayashizaki Y."/>
        </authorList>
    </citation>
    <scope>NUCLEOTIDE SEQUENCE [LARGE SCALE MRNA]</scope>
    <source>
        <strain>C57BL/6J</strain>
        <tissue>Kidney</tissue>
        <tissue>Skin</tissue>
    </source>
</reference>
<reference key="2">
    <citation type="submission" date="2009-01" db="UniProtKB">
        <authorList>
            <person name="Lubec G."/>
            <person name="Sunyer B."/>
            <person name="Chen W.-Q."/>
        </authorList>
    </citation>
    <scope>PROTEIN SEQUENCE OF 479-486</scope>
    <scope>IDENTIFICATION BY MASS SPECTROMETRY</scope>
    <source>
        <strain>OF1</strain>
        <tissue>Hippocampus</tissue>
    </source>
</reference>
<proteinExistence type="evidence at protein level"/>
<comment type="function">
    <text evidence="1">Induces the collapse and paralysis of neuronal growth cones. Could potentially act as repulsive cues toward specific neuronal populations. Binds to neuropilin (By similarity).</text>
</comment>
<comment type="subcellular location">
    <subcellularLocation>
        <location evidence="1">Secreted</location>
    </subcellularLocation>
</comment>
<comment type="domain">
    <text>Strong binding to neuropilin is mediated by the carboxy third of the protein.</text>
</comment>
<comment type="similarity">
    <text evidence="5">Belongs to the semaphorin family.</text>
</comment>